<protein>
    <recommendedName>
        <fullName>Uncharacterized protein ORF286b</fullName>
    </recommendedName>
</protein>
<reference key="1">
    <citation type="journal article" date="2005" name="J. Bacteriol.">
        <title>Structure and genome organization of AFV2, a novel archaeal lipothrixvirus with unusual terminal and core structures.</title>
        <authorList>
            <person name="Haring M."/>
            <person name="Vestergaard G."/>
            <person name="Brugger K."/>
            <person name="Rachel R."/>
            <person name="Garrett R.A."/>
            <person name="Prangishvili D."/>
        </authorList>
    </citation>
    <scope>NUCLEOTIDE SEQUENCE [GENOMIC DNA]</scope>
</reference>
<keyword id="KW-1185">Reference proteome</keyword>
<proteinExistence type="predicted"/>
<feature type="chain" id="PRO_0000384526" description="Uncharacterized protein ORF286b">
    <location>
        <begin position="1"/>
        <end position="286"/>
    </location>
</feature>
<organismHost>
    <name type="scientific">Acidianus sp. F28</name>
    <dbReference type="NCBI Taxonomy" id="315458"/>
</organismHost>
<name>Y286B_AFV2P</name>
<dbReference type="EMBL" id="AJ854042">
    <property type="protein sequence ID" value="CAH69438.1"/>
    <property type="molecule type" value="Genomic_DNA"/>
</dbReference>
<dbReference type="RefSeq" id="YP_001496976.1">
    <property type="nucleotide sequence ID" value="NC_009884.1"/>
</dbReference>
<dbReference type="KEGG" id="vg:5656080"/>
<dbReference type="Proteomes" id="UP000006364">
    <property type="component" value="Genome"/>
</dbReference>
<gene>
    <name type="ORF">ORF286b</name>
</gene>
<sequence length="286" mass="33527">MPIINYTTFSNVYFTTIVNASLKPLLFEAYKEMVASTPLSTMFSGRSYYTVRDALSSIHLITRSSNYIPLLLPVHAPRLFPMGEYVEFDIYTKKPYERRNKRYTVQIRFNIWLPFGALITTNVPQRLYSLFFPIANLLFSRINVGASLDDMLETQNIPATIGIKSRTNAMVHNVNTVSIIITKIESSTVNSYIYDYILRYQWRFDDMGGNAYNIEICNLQILHAQSCRSNKSLYDLYNDTYREFFHTDKNRYDYFTIFDKCPFTWKLYTPPRTPLCRTVVDTILYL</sequence>
<organism>
    <name type="scientific">Acidianus filamentous virus 2 (isolate Italy/Pozzuoli)</name>
    <name type="common">AFV-2</name>
    <dbReference type="NCBI Taxonomy" id="654910"/>
    <lineage>
        <taxon>Viruses</taxon>
        <taxon>Adnaviria</taxon>
        <taxon>Zilligvirae</taxon>
        <taxon>Taleaviricota</taxon>
        <taxon>Tokiviricetes</taxon>
        <taxon>Ligamenvirales</taxon>
        <taxon>Lipothrixviridae</taxon>
        <taxon>Deltalipothrixvirus</taxon>
        <taxon>Acidianus filamentous virus 2</taxon>
    </lineage>
</organism>
<accession>Q573B8</accession>